<protein>
    <recommendedName>
        <fullName>Probable G-protein coupled receptor 85</fullName>
    </recommendedName>
</protein>
<proteinExistence type="evidence at transcript level"/>
<accession>Q5RBG7</accession>
<gene>
    <name type="primary">GPR85</name>
</gene>
<keyword id="KW-1003">Cell membrane</keyword>
<keyword id="KW-1015">Disulfide bond</keyword>
<keyword id="KW-0256">Endoplasmic reticulum</keyword>
<keyword id="KW-0297">G-protein coupled receptor</keyword>
<keyword id="KW-0325">Glycoprotein</keyword>
<keyword id="KW-0472">Membrane</keyword>
<keyword id="KW-0675">Receptor</keyword>
<keyword id="KW-1185">Reference proteome</keyword>
<keyword id="KW-0807">Transducer</keyword>
<keyword id="KW-0812">Transmembrane</keyword>
<keyword id="KW-1133">Transmembrane helix</keyword>
<dbReference type="EMBL" id="CR858681">
    <property type="protein sequence ID" value="CAH90893.1"/>
    <property type="molecule type" value="mRNA"/>
</dbReference>
<dbReference type="RefSeq" id="NP_001128979.1">
    <property type="nucleotide sequence ID" value="NM_001135507.1"/>
</dbReference>
<dbReference type="SMR" id="Q5RBG7"/>
<dbReference type="STRING" id="9601.ENSPPYP00000020091"/>
<dbReference type="GlyCosmos" id="Q5RBG7">
    <property type="glycosylation" value="3 sites, No reported glycans"/>
</dbReference>
<dbReference type="GeneID" id="100190819"/>
<dbReference type="KEGG" id="pon:100190819"/>
<dbReference type="CTD" id="54329"/>
<dbReference type="eggNOG" id="KOG3656">
    <property type="taxonomic scope" value="Eukaryota"/>
</dbReference>
<dbReference type="InParanoid" id="Q5RBG7"/>
<dbReference type="OrthoDB" id="6129346at2759"/>
<dbReference type="Proteomes" id="UP000001595">
    <property type="component" value="Unplaced"/>
</dbReference>
<dbReference type="GO" id="GO:0005783">
    <property type="term" value="C:endoplasmic reticulum"/>
    <property type="evidence" value="ECO:0000250"/>
    <property type="project" value="UniProtKB"/>
</dbReference>
<dbReference type="GO" id="GO:0005886">
    <property type="term" value="C:plasma membrane"/>
    <property type="evidence" value="ECO:0007669"/>
    <property type="project" value="UniProtKB-SubCell"/>
</dbReference>
<dbReference type="GO" id="GO:0004930">
    <property type="term" value="F:G protein-coupled receptor activity"/>
    <property type="evidence" value="ECO:0007669"/>
    <property type="project" value="UniProtKB-KW"/>
</dbReference>
<dbReference type="CDD" id="cd15218">
    <property type="entry name" value="7tmA_SREB2_GPR85"/>
    <property type="match status" value="1"/>
</dbReference>
<dbReference type="FunFam" id="1.20.1070.10:FF:000074">
    <property type="entry name" value="probable G-protein coupled receptor 173"/>
    <property type="match status" value="1"/>
</dbReference>
<dbReference type="Gene3D" id="1.20.1070.10">
    <property type="entry name" value="Rhodopsin 7-helix transmembrane proteins"/>
    <property type="match status" value="1"/>
</dbReference>
<dbReference type="InterPro" id="IPR051509">
    <property type="entry name" value="GPCR_Orphan/Phoenixin"/>
</dbReference>
<dbReference type="InterPro" id="IPR000276">
    <property type="entry name" value="GPCR_Rhodpsn"/>
</dbReference>
<dbReference type="InterPro" id="IPR017452">
    <property type="entry name" value="GPCR_Rhodpsn_7TM"/>
</dbReference>
<dbReference type="PANTHER" id="PTHR19268">
    <property type="entry name" value="G PROTEIN-COUPLED RECEPTOR"/>
    <property type="match status" value="1"/>
</dbReference>
<dbReference type="PANTHER" id="PTHR19268:SF7">
    <property type="entry name" value="G-PROTEIN COUPLED RECEPTOR 85-RELATED"/>
    <property type="match status" value="1"/>
</dbReference>
<dbReference type="Pfam" id="PF00001">
    <property type="entry name" value="7tm_1"/>
    <property type="match status" value="1"/>
</dbReference>
<dbReference type="PRINTS" id="PR00237">
    <property type="entry name" value="GPCRRHODOPSN"/>
</dbReference>
<dbReference type="SUPFAM" id="SSF81321">
    <property type="entry name" value="Family A G protein-coupled receptor-like"/>
    <property type="match status" value="1"/>
</dbReference>
<dbReference type="PROSITE" id="PS50262">
    <property type="entry name" value="G_PROTEIN_RECEP_F1_2"/>
    <property type="match status" value="1"/>
</dbReference>
<sequence length="370" mass="41957">MANYSHAADNILQNLSPLTAFLKLTSLGFIIGVSVVGNLLISILLAKDKTLHRAPYYFLLDLCCSDILRSAICFPFVFNSVKNGSTWTYGTLTCKVIAFLGVLSCFHTAFMLFCISVTRYLAIAHHRFYTKRLTFWTCLAVICMVWTLSVAMAFPPVLDVGTYSFIREEDQCTFQHRSFRANDSLGFMLLLALILLATQLVYLKLIFFVHDRRKMKPVQFVAAVSQNWTFHGPGASGQAAANWLAGFGRGSTPPTLLGIRQNANTTGRRRLLVLDEFKMEKRISRMFYIMTFLFLTLWGPYLVACYWRVFARGPVVPGGFLTAAVWMSFAQAGINPFVCIFSNRELRRCFSTTLLYCRKSRLPREPYCVI</sequence>
<name>GPR85_PONAB</name>
<reference key="1">
    <citation type="submission" date="2004-11" db="EMBL/GenBank/DDBJ databases">
        <authorList>
            <consortium name="The German cDNA consortium"/>
        </authorList>
    </citation>
    <scope>NUCLEOTIDE SEQUENCE [LARGE SCALE MRNA]</scope>
    <source>
        <tissue>Brain cortex</tissue>
    </source>
</reference>
<organism>
    <name type="scientific">Pongo abelii</name>
    <name type="common">Sumatran orangutan</name>
    <name type="synonym">Pongo pygmaeus abelii</name>
    <dbReference type="NCBI Taxonomy" id="9601"/>
    <lineage>
        <taxon>Eukaryota</taxon>
        <taxon>Metazoa</taxon>
        <taxon>Chordata</taxon>
        <taxon>Craniata</taxon>
        <taxon>Vertebrata</taxon>
        <taxon>Euteleostomi</taxon>
        <taxon>Mammalia</taxon>
        <taxon>Eutheria</taxon>
        <taxon>Euarchontoglires</taxon>
        <taxon>Primates</taxon>
        <taxon>Haplorrhini</taxon>
        <taxon>Catarrhini</taxon>
        <taxon>Hominidae</taxon>
        <taxon>Pongo</taxon>
    </lineage>
</organism>
<evidence type="ECO:0000250" key="1"/>
<evidence type="ECO:0000250" key="2">
    <source>
        <dbReference type="UniProtKB" id="P60893"/>
    </source>
</evidence>
<evidence type="ECO:0000255" key="3"/>
<evidence type="ECO:0000255" key="4">
    <source>
        <dbReference type="PROSITE-ProRule" id="PRU00521"/>
    </source>
</evidence>
<comment type="function">
    <text>Orphan receptor.</text>
</comment>
<comment type="subunit">
    <text evidence="2">Interacts with DLG4 and DLG3.</text>
</comment>
<comment type="subcellular location">
    <subcellularLocation>
        <location evidence="1">Cell membrane</location>
        <topology evidence="1">Multi-pass membrane protein</topology>
    </subcellularLocation>
    <subcellularLocation>
        <location evidence="2">Endoplasmic reticulum</location>
    </subcellularLocation>
</comment>
<comment type="similarity">
    <text evidence="4">Belongs to the G-protein coupled receptor 1 family.</text>
</comment>
<feature type="chain" id="PRO_0000260311" description="Probable G-protein coupled receptor 85">
    <location>
        <begin position="1"/>
        <end position="370"/>
    </location>
</feature>
<feature type="topological domain" description="Extracellular" evidence="3">
    <location>
        <begin position="1"/>
        <end position="25"/>
    </location>
</feature>
<feature type="transmembrane region" description="Helical; Name=1" evidence="3">
    <location>
        <begin position="26"/>
        <end position="46"/>
    </location>
</feature>
<feature type="topological domain" description="Cytoplasmic" evidence="3">
    <location>
        <begin position="47"/>
        <end position="57"/>
    </location>
</feature>
<feature type="transmembrane region" description="Helical; Name=2" evidence="3">
    <location>
        <begin position="58"/>
        <end position="78"/>
    </location>
</feature>
<feature type="topological domain" description="Extracellular" evidence="3">
    <location>
        <begin position="79"/>
        <end position="96"/>
    </location>
</feature>
<feature type="transmembrane region" description="Helical; Name=3" evidence="3">
    <location>
        <begin position="97"/>
        <end position="117"/>
    </location>
</feature>
<feature type="topological domain" description="Cytoplasmic" evidence="3">
    <location>
        <begin position="118"/>
        <end position="137"/>
    </location>
</feature>
<feature type="transmembrane region" description="Helical; Name=4" evidence="3">
    <location>
        <begin position="138"/>
        <end position="158"/>
    </location>
</feature>
<feature type="topological domain" description="Extracellular" evidence="3">
    <location>
        <begin position="159"/>
        <end position="188"/>
    </location>
</feature>
<feature type="transmembrane region" description="Helical; Name=5" evidence="3">
    <location>
        <begin position="189"/>
        <end position="209"/>
    </location>
</feature>
<feature type="topological domain" description="Cytoplasmic" evidence="3">
    <location>
        <begin position="210"/>
        <end position="286"/>
    </location>
</feature>
<feature type="transmembrane region" description="Helical; Name=6" evidence="3">
    <location>
        <begin position="287"/>
        <end position="307"/>
    </location>
</feature>
<feature type="topological domain" description="Extracellular" evidence="3">
    <location>
        <begin position="308"/>
        <end position="313"/>
    </location>
</feature>
<feature type="transmembrane region" description="Helical; Name=7" evidence="3">
    <location>
        <begin position="314"/>
        <end position="334"/>
    </location>
</feature>
<feature type="topological domain" description="Cytoplasmic" evidence="3">
    <location>
        <begin position="335"/>
        <end position="370"/>
    </location>
</feature>
<feature type="glycosylation site" description="N-linked (GlcNAc...) asparagine" evidence="3">
    <location>
        <position position="3"/>
    </location>
</feature>
<feature type="glycosylation site" description="N-linked (GlcNAc...) asparagine" evidence="3">
    <location>
        <position position="83"/>
    </location>
</feature>
<feature type="glycosylation site" description="N-linked (GlcNAc...) asparagine" evidence="3">
    <location>
        <position position="182"/>
    </location>
</feature>
<feature type="disulfide bond" evidence="4">
    <location>
        <begin position="94"/>
        <end position="172"/>
    </location>
</feature>